<gene>
    <name evidence="1" type="primary">aat</name>
    <name type="ordered locus">Pmen_2390</name>
</gene>
<sequence length="226" mass="25562">MLTWLQRDSFQFPPLAKAMREPNGLLAAGGDLSAERLISAYRHGCFPWFQDGQPILWWSPDPRTVLFPQELHISRSLAKLLRQQRYRVTFDQDFAAVIAACAAPRAYADGTWITRGMQEAYRQLHQRGIAHSVEVWQGEQLVGGLYGLAIGQLFFGESMFSRADNASKVGFATLVGKLQEWGFVLIDCQMPTQHLHSFGARAIPRATFADYLQRHLNLPSRADWLA</sequence>
<keyword id="KW-0012">Acyltransferase</keyword>
<keyword id="KW-0963">Cytoplasm</keyword>
<keyword id="KW-0808">Transferase</keyword>
<evidence type="ECO:0000255" key="1">
    <source>
        <dbReference type="HAMAP-Rule" id="MF_00688"/>
    </source>
</evidence>
<name>LFTR_ECTM1</name>
<accession>A4XUY0</accession>
<comment type="function">
    <text evidence="1">Functions in the N-end rule pathway of protein degradation where it conjugates Leu, Phe and, less efficiently, Met from aminoacyl-tRNAs to the N-termini of proteins containing an N-terminal arginine or lysine.</text>
</comment>
<comment type="catalytic activity">
    <reaction evidence="1">
        <text>N-terminal L-lysyl-[protein] + L-leucyl-tRNA(Leu) = N-terminal L-leucyl-L-lysyl-[protein] + tRNA(Leu) + H(+)</text>
        <dbReference type="Rhea" id="RHEA:12340"/>
        <dbReference type="Rhea" id="RHEA-COMP:9613"/>
        <dbReference type="Rhea" id="RHEA-COMP:9622"/>
        <dbReference type="Rhea" id="RHEA-COMP:12670"/>
        <dbReference type="Rhea" id="RHEA-COMP:12671"/>
        <dbReference type="ChEBI" id="CHEBI:15378"/>
        <dbReference type="ChEBI" id="CHEBI:65249"/>
        <dbReference type="ChEBI" id="CHEBI:78442"/>
        <dbReference type="ChEBI" id="CHEBI:78494"/>
        <dbReference type="ChEBI" id="CHEBI:133043"/>
        <dbReference type="EC" id="2.3.2.6"/>
    </reaction>
</comment>
<comment type="catalytic activity">
    <reaction evidence="1">
        <text>N-terminal L-arginyl-[protein] + L-leucyl-tRNA(Leu) = N-terminal L-leucyl-L-arginyl-[protein] + tRNA(Leu) + H(+)</text>
        <dbReference type="Rhea" id="RHEA:50416"/>
        <dbReference type="Rhea" id="RHEA-COMP:9613"/>
        <dbReference type="Rhea" id="RHEA-COMP:9622"/>
        <dbReference type="Rhea" id="RHEA-COMP:12672"/>
        <dbReference type="Rhea" id="RHEA-COMP:12673"/>
        <dbReference type="ChEBI" id="CHEBI:15378"/>
        <dbReference type="ChEBI" id="CHEBI:64719"/>
        <dbReference type="ChEBI" id="CHEBI:78442"/>
        <dbReference type="ChEBI" id="CHEBI:78494"/>
        <dbReference type="ChEBI" id="CHEBI:133044"/>
        <dbReference type="EC" id="2.3.2.6"/>
    </reaction>
</comment>
<comment type="catalytic activity">
    <reaction evidence="1">
        <text>L-phenylalanyl-tRNA(Phe) + an N-terminal L-alpha-aminoacyl-[protein] = an N-terminal L-phenylalanyl-L-alpha-aminoacyl-[protein] + tRNA(Phe)</text>
        <dbReference type="Rhea" id="RHEA:43632"/>
        <dbReference type="Rhea" id="RHEA-COMP:9668"/>
        <dbReference type="Rhea" id="RHEA-COMP:9699"/>
        <dbReference type="Rhea" id="RHEA-COMP:10636"/>
        <dbReference type="Rhea" id="RHEA-COMP:10637"/>
        <dbReference type="ChEBI" id="CHEBI:78442"/>
        <dbReference type="ChEBI" id="CHEBI:78531"/>
        <dbReference type="ChEBI" id="CHEBI:78597"/>
        <dbReference type="ChEBI" id="CHEBI:83561"/>
        <dbReference type="EC" id="2.3.2.6"/>
    </reaction>
</comment>
<comment type="subcellular location">
    <subcellularLocation>
        <location evidence="1">Cytoplasm</location>
    </subcellularLocation>
</comment>
<comment type="similarity">
    <text evidence="1">Belongs to the L/F-transferase family.</text>
</comment>
<reference key="1">
    <citation type="submission" date="2007-04" db="EMBL/GenBank/DDBJ databases">
        <title>Complete sequence of Pseudomonas mendocina ymp.</title>
        <authorList>
            <consortium name="US DOE Joint Genome Institute"/>
            <person name="Copeland A."/>
            <person name="Lucas S."/>
            <person name="Lapidus A."/>
            <person name="Barry K."/>
            <person name="Glavina del Rio T."/>
            <person name="Dalin E."/>
            <person name="Tice H."/>
            <person name="Pitluck S."/>
            <person name="Kiss H."/>
            <person name="Brettin T."/>
            <person name="Detter J.C."/>
            <person name="Bruce D."/>
            <person name="Han C."/>
            <person name="Schmutz J."/>
            <person name="Larimer F."/>
            <person name="Land M."/>
            <person name="Hauser L."/>
            <person name="Kyrpides N."/>
            <person name="Mikhailova N."/>
            <person name="Hersman L."/>
            <person name="Dubois J."/>
            <person name="Maurice P."/>
            <person name="Richardson P."/>
        </authorList>
    </citation>
    <scope>NUCLEOTIDE SEQUENCE [LARGE SCALE GENOMIC DNA]</scope>
    <source>
        <strain>ymp</strain>
    </source>
</reference>
<protein>
    <recommendedName>
        <fullName evidence="1">Leucyl/phenylalanyl-tRNA--protein transferase</fullName>
        <ecNumber evidence="1">2.3.2.6</ecNumber>
    </recommendedName>
    <alternativeName>
        <fullName evidence="1">L/F-transferase</fullName>
    </alternativeName>
    <alternativeName>
        <fullName evidence="1">Leucyltransferase</fullName>
    </alternativeName>
    <alternativeName>
        <fullName evidence="1">Phenyalanyltransferase</fullName>
    </alternativeName>
</protein>
<dbReference type="EC" id="2.3.2.6" evidence="1"/>
<dbReference type="EMBL" id="CP000680">
    <property type="protein sequence ID" value="ABP85146.1"/>
    <property type="molecule type" value="Genomic_DNA"/>
</dbReference>
<dbReference type="SMR" id="A4XUY0"/>
<dbReference type="STRING" id="399739.Pmen_2390"/>
<dbReference type="KEGG" id="pmy:Pmen_2390"/>
<dbReference type="PATRIC" id="fig|399739.8.peg.2411"/>
<dbReference type="eggNOG" id="COG2360">
    <property type="taxonomic scope" value="Bacteria"/>
</dbReference>
<dbReference type="HOGENOM" id="CLU_075045_0_0_6"/>
<dbReference type="OrthoDB" id="9790282at2"/>
<dbReference type="GO" id="GO:0005737">
    <property type="term" value="C:cytoplasm"/>
    <property type="evidence" value="ECO:0007669"/>
    <property type="project" value="UniProtKB-SubCell"/>
</dbReference>
<dbReference type="GO" id="GO:0008914">
    <property type="term" value="F:leucyl-tRNA--protein transferase activity"/>
    <property type="evidence" value="ECO:0007669"/>
    <property type="project" value="UniProtKB-UniRule"/>
</dbReference>
<dbReference type="GO" id="GO:0030163">
    <property type="term" value="P:protein catabolic process"/>
    <property type="evidence" value="ECO:0007669"/>
    <property type="project" value="UniProtKB-UniRule"/>
</dbReference>
<dbReference type="FunFam" id="3.30.70.3550:FF:000001">
    <property type="entry name" value="Leucyl/phenylalanyl-tRNA--protein transferase"/>
    <property type="match status" value="1"/>
</dbReference>
<dbReference type="FunFam" id="3.40.630.70:FF:000001">
    <property type="entry name" value="Leucyl/phenylalanyl-tRNA--protein transferase"/>
    <property type="match status" value="1"/>
</dbReference>
<dbReference type="Gene3D" id="3.40.630.70">
    <property type="entry name" value="Leucyl/phenylalanyl-tRNA-protein transferase, C-terminal domain"/>
    <property type="match status" value="1"/>
</dbReference>
<dbReference type="Gene3D" id="3.30.70.3550">
    <property type="entry name" value="Leucyl/phenylalanyl-tRNA-protein transferase, N-terminal domain"/>
    <property type="match status" value="1"/>
</dbReference>
<dbReference type="HAMAP" id="MF_00688">
    <property type="entry name" value="Leu_Phe_trans"/>
    <property type="match status" value="1"/>
</dbReference>
<dbReference type="InterPro" id="IPR016181">
    <property type="entry name" value="Acyl_CoA_acyltransferase"/>
</dbReference>
<dbReference type="InterPro" id="IPR004616">
    <property type="entry name" value="Leu/Phe-tRNA_Trfase"/>
</dbReference>
<dbReference type="InterPro" id="IPR042203">
    <property type="entry name" value="Leu/Phe-tRNA_Trfase_C"/>
</dbReference>
<dbReference type="InterPro" id="IPR042221">
    <property type="entry name" value="Leu/Phe-tRNA_Trfase_N"/>
</dbReference>
<dbReference type="NCBIfam" id="TIGR00667">
    <property type="entry name" value="aat"/>
    <property type="match status" value="1"/>
</dbReference>
<dbReference type="PANTHER" id="PTHR30098">
    <property type="entry name" value="LEUCYL/PHENYLALANYL-TRNA--PROTEIN TRANSFERASE"/>
    <property type="match status" value="1"/>
</dbReference>
<dbReference type="PANTHER" id="PTHR30098:SF2">
    <property type="entry name" value="LEUCYL_PHENYLALANYL-TRNA--PROTEIN TRANSFERASE"/>
    <property type="match status" value="1"/>
</dbReference>
<dbReference type="Pfam" id="PF03588">
    <property type="entry name" value="Leu_Phe_trans"/>
    <property type="match status" value="1"/>
</dbReference>
<dbReference type="SUPFAM" id="SSF55729">
    <property type="entry name" value="Acyl-CoA N-acyltransferases (Nat)"/>
    <property type="match status" value="1"/>
</dbReference>
<proteinExistence type="inferred from homology"/>
<organism>
    <name type="scientific">Ectopseudomonas mendocina (strain ymp)</name>
    <name type="common">Pseudomonas mendocina</name>
    <dbReference type="NCBI Taxonomy" id="399739"/>
    <lineage>
        <taxon>Bacteria</taxon>
        <taxon>Pseudomonadati</taxon>
        <taxon>Pseudomonadota</taxon>
        <taxon>Gammaproteobacteria</taxon>
        <taxon>Pseudomonadales</taxon>
        <taxon>Pseudomonadaceae</taxon>
        <taxon>Ectopseudomonas</taxon>
    </lineage>
</organism>
<feature type="chain" id="PRO_1000045111" description="Leucyl/phenylalanyl-tRNA--protein transferase">
    <location>
        <begin position="1"/>
        <end position="226"/>
    </location>
</feature>